<reference key="1">
    <citation type="journal article" date="2005" name="DNA Res.">
        <title>Signal sequence and keyword trap in silico for selection of full-length human cDNAs encoding secretion or membrane proteins from oligo-capped cDNA libraries.</title>
        <authorList>
            <person name="Otsuki T."/>
            <person name="Ota T."/>
            <person name="Nishikawa T."/>
            <person name="Hayashi K."/>
            <person name="Suzuki Y."/>
            <person name="Yamamoto J."/>
            <person name="Wakamatsu A."/>
            <person name="Kimura K."/>
            <person name="Sakamoto K."/>
            <person name="Hatano N."/>
            <person name="Kawai Y."/>
            <person name="Ishii S."/>
            <person name="Saito K."/>
            <person name="Kojima S."/>
            <person name="Sugiyama T."/>
            <person name="Ono T."/>
            <person name="Okano K."/>
            <person name="Yoshikawa Y."/>
            <person name="Aotsuka S."/>
            <person name="Sasaki N."/>
            <person name="Hattori A."/>
            <person name="Okumura K."/>
            <person name="Nagai K."/>
            <person name="Sugano S."/>
            <person name="Isogai T."/>
        </authorList>
    </citation>
    <scope>NUCLEOTIDE SEQUENCE [LARGE SCALE MRNA] (ISOFORM 2)</scope>
</reference>
<reference key="2">
    <citation type="journal article" date="2004" name="Nature">
        <title>The DNA sequence and biology of human chromosome 19.</title>
        <authorList>
            <person name="Grimwood J."/>
            <person name="Gordon L.A."/>
            <person name="Olsen A.S."/>
            <person name="Terry A."/>
            <person name="Schmutz J."/>
            <person name="Lamerdin J.E."/>
            <person name="Hellsten U."/>
            <person name="Goodstein D."/>
            <person name="Couronne O."/>
            <person name="Tran-Gyamfi M."/>
            <person name="Aerts A."/>
            <person name="Altherr M."/>
            <person name="Ashworth L."/>
            <person name="Bajorek E."/>
            <person name="Black S."/>
            <person name="Branscomb E."/>
            <person name="Caenepeel S."/>
            <person name="Carrano A.V."/>
            <person name="Caoile C."/>
            <person name="Chan Y.M."/>
            <person name="Christensen M."/>
            <person name="Cleland C.A."/>
            <person name="Copeland A."/>
            <person name="Dalin E."/>
            <person name="Dehal P."/>
            <person name="Denys M."/>
            <person name="Detter J.C."/>
            <person name="Escobar J."/>
            <person name="Flowers D."/>
            <person name="Fotopulos D."/>
            <person name="Garcia C."/>
            <person name="Georgescu A.M."/>
            <person name="Glavina T."/>
            <person name="Gomez M."/>
            <person name="Gonzales E."/>
            <person name="Groza M."/>
            <person name="Hammon N."/>
            <person name="Hawkins T."/>
            <person name="Haydu L."/>
            <person name="Ho I."/>
            <person name="Huang W."/>
            <person name="Israni S."/>
            <person name="Jett J."/>
            <person name="Kadner K."/>
            <person name="Kimball H."/>
            <person name="Kobayashi A."/>
            <person name="Larionov V."/>
            <person name="Leem S.-H."/>
            <person name="Lopez F."/>
            <person name="Lou Y."/>
            <person name="Lowry S."/>
            <person name="Malfatti S."/>
            <person name="Martinez D."/>
            <person name="McCready P.M."/>
            <person name="Medina C."/>
            <person name="Morgan J."/>
            <person name="Nelson K."/>
            <person name="Nolan M."/>
            <person name="Ovcharenko I."/>
            <person name="Pitluck S."/>
            <person name="Pollard M."/>
            <person name="Popkie A.P."/>
            <person name="Predki P."/>
            <person name="Quan G."/>
            <person name="Ramirez L."/>
            <person name="Rash S."/>
            <person name="Retterer J."/>
            <person name="Rodriguez A."/>
            <person name="Rogers S."/>
            <person name="Salamov A."/>
            <person name="Salazar A."/>
            <person name="She X."/>
            <person name="Smith D."/>
            <person name="Slezak T."/>
            <person name="Solovyev V."/>
            <person name="Thayer N."/>
            <person name="Tice H."/>
            <person name="Tsai M."/>
            <person name="Ustaszewska A."/>
            <person name="Vo N."/>
            <person name="Wagner M."/>
            <person name="Wheeler J."/>
            <person name="Wu K."/>
            <person name="Xie G."/>
            <person name="Yang J."/>
            <person name="Dubchak I."/>
            <person name="Furey T.S."/>
            <person name="DeJong P."/>
            <person name="Dickson M."/>
            <person name="Gordon D."/>
            <person name="Eichler E.E."/>
            <person name="Pennacchio L.A."/>
            <person name="Richardson P."/>
            <person name="Stubbs L."/>
            <person name="Rokhsar D.S."/>
            <person name="Myers R.M."/>
            <person name="Rubin E.M."/>
            <person name="Lucas S.M."/>
        </authorList>
    </citation>
    <scope>NUCLEOTIDE SEQUENCE [LARGE SCALE GENOMIC DNA]</scope>
</reference>
<reference key="3">
    <citation type="journal article" date="2004" name="Genome Res.">
        <title>The status, quality, and expansion of the NIH full-length cDNA project: the Mammalian Gene Collection (MGC).</title>
        <authorList>
            <consortium name="The MGC Project Team"/>
        </authorList>
    </citation>
    <scope>NUCLEOTIDE SEQUENCE [LARGE SCALE MRNA] (ISOFORM 1)</scope>
    <source>
        <tissue>Brain</tissue>
    </source>
</reference>
<reference key="4">
    <citation type="journal article" date="2000" name="DNA Res.">
        <title>Prediction of the coding sequences of unidentified human genes. XVII. The complete sequences of 100 new cDNA clones from brain which code for large proteins in vitro.</title>
        <authorList>
            <person name="Nagase T."/>
            <person name="Kikuno R."/>
            <person name="Ishikawa K."/>
            <person name="Hirosawa M."/>
            <person name="Ohara O."/>
        </authorList>
    </citation>
    <scope>NUCLEOTIDE SEQUENCE [LARGE SCALE MRNA] OF 71-724 (ISOFORM 3)</scope>
    <source>
        <tissue>Brain</tissue>
    </source>
</reference>
<reference key="5">
    <citation type="journal article" date="2008" name="Proc. Natl. Acad. Sci. U.S.A.">
        <title>A quantitative atlas of mitotic phosphorylation.</title>
        <authorList>
            <person name="Dephoure N."/>
            <person name="Zhou C."/>
            <person name="Villen J."/>
            <person name="Beausoleil S.A."/>
            <person name="Bakalarski C.E."/>
            <person name="Elledge S.J."/>
            <person name="Gygi S.P."/>
        </authorList>
    </citation>
    <scope>PHOSPHORYLATION [LARGE SCALE ANALYSIS] AT SER-263 AND SER-267</scope>
    <scope>IDENTIFICATION BY MASS SPECTROMETRY [LARGE SCALE ANALYSIS]</scope>
    <source>
        <tissue>Cervix carcinoma</tissue>
    </source>
</reference>
<reference key="6">
    <citation type="journal article" date="2009" name="Sci. Signal.">
        <title>Quantitative phosphoproteomic analysis of T cell receptor signaling reveals system-wide modulation of protein-protein interactions.</title>
        <authorList>
            <person name="Mayya V."/>
            <person name="Lundgren D.H."/>
            <person name="Hwang S.-I."/>
            <person name="Rezaul K."/>
            <person name="Wu L."/>
            <person name="Eng J.K."/>
            <person name="Rodionov V."/>
            <person name="Han D.K."/>
        </authorList>
    </citation>
    <scope>PHOSPHORYLATION [LARGE SCALE ANALYSIS] AT SER-263</scope>
    <scope>IDENTIFICATION BY MASS SPECTROMETRY [LARGE SCALE ANALYSIS]</scope>
    <source>
        <tissue>Leukemic T-cell</tissue>
    </source>
</reference>
<reference key="7">
    <citation type="journal article" date="2011" name="Sci. Signal.">
        <title>System-wide temporal characterization of the proteome and phosphoproteome of human embryonic stem cell differentiation.</title>
        <authorList>
            <person name="Rigbolt K.T."/>
            <person name="Prokhorova T.A."/>
            <person name="Akimov V."/>
            <person name="Henningsen J."/>
            <person name="Johansen P.T."/>
            <person name="Kratchmarova I."/>
            <person name="Kassem M."/>
            <person name="Mann M."/>
            <person name="Olsen J.V."/>
            <person name="Blagoev B."/>
        </authorList>
    </citation>
    <scope>PHOSPHORYLATION [LARGE SCALE ANALYSIS] AT SER-263</scope>
    <scope>IDENTIFICATION BY MASS SPECTROMETRY [LARGE SCALE ANALYSIS]</scope>
</reference>
<reference key="8">
    <citation type="journal article" date="2013" name="J. Proteome Res.">
        <title>Toward a comprehensive characterization of a human cancer cell phosphoproteome.</title>
        <authorList>
            <person name="Zhou H."/>
            <person name="Di Palma S."/>
            <person name="Preisinger C."/>
            <person name="Peng M."/>
            <person name="Polat A.N."/>
            <person name="Heck A.J."/>
            <person name="Mohammed S."/>
        </authorList>
    </citation>
    <scope>PHOSPHORYLATION [LARGE SCALE ANALYSIS] AT SER-415</scope>
    <scope>IDENTIFICATION BY MASS SPECTROMETRY [LARGE SCALE ANALYSIS]</scope>
    <source>
        <tissue>Erythroleukemia</tissue>
    </source>
</reference>
<reference key="9">
    <citation type="journal article" date="2016" name="Sci. Rep.">
        <title>GRAM domain-containing protein 1A (GRAMD1A) promotes the expansion of hepatocellular carcinoma stem cell and hepatocellular carcinoma growth through STAT5.</title>
        <authorList>
            <person name="Fu B."/>
            <person name="Meng W."/>
            <person name="Zhao H."/>
            <person name="Zhang B."/>
            <person name="Tang H."/>
            <person name="Zou Y."/>
            <person name="Yao J."/>
            <person name="Li H."/>
            <person name="Zhang T."/>
        </authorList>
    </citation>
    <scope>INDUCTION</scope>
    <scope>TISSUE SPECIFICITY</scope>
    <scope>FUNCTION</scope>
</reference>
<reference key="10">
    <citation type="journal article" date="2018" name="Elife">
        <title>GRAM domain proteins specialize functionally distinct ER-PM contact sites in human cells.</title>
        <authorList>
            <person name="Besprozvannaya M."/>
            <person name="Dickson E."/>
            <person name="Li H."/>
            <person name="Ginburg K.S."/>
            <person name="Bers D.M."/>
            <person name="Auwerx J."/>
            <person name="Nunnari J."/>
        </authorList>
    </citation>
    <scope>SUBCELLULAR LOCATION</scope>
    <scope>DOMAIN GRAM</scope>
</reference>
<reference key="11">
    <citation type="journal article" date="2019" name="Nat. Chem. Biol.">
        <title>The cholesterol transfer protein GRAMD1A regulates autophagosome biogenesis.</title>
        <authorList>
            <person name="Laraia L."/>
            <person name="Friese A."/>
            <person name="Corkery D.P."/>
            <person name="Konstantinidis G."/>
            <person name="Erwin N."/>
            <person name="Hofer W."/>
            <person name="Karatas H."/>
            <person name="Klewer L."/>
            <person name="Brockmeyer A."/>
            <person name="Metz M."/>
            <person name="Schoelermann B."/>
            <person name="Dwivedi M."/>
            <person name="Li L."/>
            <person name="Rios-Munoz P."/>
            <person name="Koehn M."/>
            <person name="Winter R."/>
            <person name="Vetter I.R."/>
            <person name="Ziegler S."/>
            <person name="Janning P."/>
            <person name="Wu Y.W."/>
            <person name="Waldmann H."/>
        </authorList>
    </citation>
    <scope>FUNCTION</scope>
    <scope>SUBCELLULAR LOCATION</scope>
</reference>
<name>ASTRA_HUMAN</name>
<evidence type="ECO:0000250" key="1">
    <source>
        <dbReference type="UniProtKB" id="Q8VEF1"/>
    </source>
</evidence>
<evidence type="ECO:0000255" key="2"/>
<evidence type="ECO:0000255" key="3">
    <source>
        <dbReference type="PROSITE-ProRule" id="PRU01114"/>
    </source>
</evidence>
<evidence type="ECO:0000256" key="4">
    <source>
        <dbReference type="SAM" id="MobiDB-lite"/>
    </source>
</evidence>
<evidence type="ECO:0000269" key="5">
    <source>
    </source>
</evidence>
<evidence type="ECO:0000269" key="6">
    <source>
    </source>
</evidence>
<evidence type="ECO:0000269" key="7">
    <source>
    </source>
</evidence>
<evidence type="ECO:0000303" key="8">
    <source>
    </source>
</evidence>
<evidence type="ECO:0000303" key="9">
    <source>
    </source>
</evidence>
<evidence type="ECO:0000305" key="10"/>
<evidence type="ECO:0000312" key="11">
    <source>
        <dbReference type="HGNC" id="HGNC:29305"/>
    </source>
</evidence>
<evidence type="ECO:0007744" key="12">
    <source>
    </source>
</evidence>
<evidence type="ECO:0007744" key="13">
    <source>
    </source>
</evidence>
<evidence type="ECO:0007744" key="14">
    <source>
    </source>
</evidence>
<evidence type="ECO:0007744" key="15">
    <source>
    </source>
</evidence>
<dbReference type="EMBL" id="AK074914">
    <property type="protein sequence ID" value="BAC11289.1"/>
    <property type="molecule type" value="mRNA"/>
</dbReference>
<dbReference type="EMBL" id="AC020907">
    <property type="status" value="NOT_ANNOTATED_CDS"/>
    <property type="molecule type" value="Genomic_DNA"/>
</dbReference>
<dbReference type="EMBL" id="BC014077">
    <property type="protein sequence ID" value="AAH14077.2"/>
    <property type="molecule type" value="mRNA"/>
</dbReference>
<dbReference type="EMBL" id="AB040966">
    <property type="protein sequence ID" value="BAA96057.1"/>
    <property type="molecule type" value="mRNA"/>
</dbReference>
<dbReference type="CCDS" id="CCDS42546.1">
    <molecule id="Q96CP6-1"/>
</dbReference>
<dbReference type="CCDS" id="CCDS46046.1">
    <molecule id="Q96CP6-2"/>
</dbReference>
<dbReference type="CCDS" id="CCDS92585.1">
    <molecule id="Q96CP6-3"/>
</dbReference>
<dbReference type="RefSeq" id="NP_001129671.1">
    <molecule id="Q96CP6-2"/>
    <property type="nucleotide sequence ID" value="NM_001136199.3"/>
</dbReference>
<dbReference type="RefSeq" id="NP_001306963.1">
    <molecule id="Q96CP6-3"/>
    <property type="nucleotide sequence ID" value="NM_001320034.2"/>
</dbReference>
<dbReference type="RefSeq" id="NP_001306964.1">
    <property type="nucleotide sequence ID" value="NM_001320035.1"/>
</dbReference>
<dbReference type="RefSeq" id="NP_001306965.1">
    <property type="nucleotide sequence ID" value="NM_001320036.1"/>
</dbReference>
<dbReference type="RefSeq" id="NP_065946.2">
    <molecule id="Q96CP6-1"/>
    <property type="nucleotide sequence ID" value="NM_020895.5"/>
</dbReference>
<dbReference type="SMR" id="Q96CP6"/>
<dbReference type="BioGRID" id="121690">
    <property type="interactions" value="184"/>
</dbReference>
<dbReference type="FunCoup" id="Q96CP6">
    <property type="interactions" value="1412"/>
</dbReference>
<dbReference type="IntAct" id="Q96CP6">
    <property type="interactions" value="89"/>
</dbReference>
<dbReference type="MINT" id="Q96CP6"/>
<dbReference type="STRING" id="9606.ENSP00000441032"/>
<dbReference type="TCDB" id="9.B.198.2.6">
    <property type="family name" value="the membrane-anchored lipid-binding protein (lam) family"/>
</dbReference>
<dbReference type="GlyGen" id="Q96CP6">
    <property type="glycosylation" value="2 sites, 1 O-linked glycan (1 site)"/>
</dbReference>
<dbReference type="iPTMnet" id="Q96CP6"/>
<dbReference type="PhosphoSitePlus" id="Q96CP6"/>
<dbReference type="SwissPalm" id="Q96CP6"/>
<dbReference type="BioMuta" id="GRAMD1A"/>
<dbReference type="DMDM" id="121944494"/>
<dbReference type="jPOST" id="Q96CP6"/>
<dbReference type="MassIVE" id="Q96CP6"/>
<dbReference type="PaxDb" id="9606-ENSP00000441032"/>
<dbReference type="PeptideAtlas" id="Q96CP6"/>
<dbReference type="ProteomicsDB" id="76203">
    <molecule id="Q96CP6-1"/>
</dbReference>
<dbReference type="ProteomicsDB" id="76204">
    <molecule id="Q96CP6-2"/>
</dbReference>
<dbReference type="ProteomicsDB" id="76205">
    <molecule id="Q96CP6-3"/>
</dbReference>
<dbReference type="Pumba" id="Q96CP6"/>
<dbReference type="Antibodypedia" id="2264">
    <property type="antibodies" value="74 antibodies from 15 providers"/>
</dbReference>
<dbReference type="DNASU" id="57655"/>
<dbReference type="Ensembl" id="ENST00000317991.10">
    <molecule id="Q96CP6-1"/>
    <property type="protein sequence ID" value="ENSP00000441032.1"/>
    <property type="gene ID" value="ENSG00000089351.15"/>
</dbReference>
<dbReference type="Ensembl" id="ENST00000411896.6">
    <molecule id="Q96CP6-2"/>
    <property type="protein sequence ID" value="ENSP00000439267.1"/>
    <property type="gene ID" value="ENSG00000089351.15"/>
</dbReference>
<dbReference type="Ensembl" id="ENST00000680623.1">
    <molecule id="Q96CP6-3"/>
    <property type="protein sequence ID" value="ENSP00000505404.1"/>
    <property type="gene ID" value="ENSG00000089351.15"/>
</dbReference>
<dbReference type="GeneID" id="57655"/>
<dbReference type="KEGG" id="hsa:57655"/>
<dbReference type="MANE-Select" id="ENST00000317991.10">
    <property type="protein sequence ID" value="ENSP00000441032.1"/>
    <property type="RefSeq nucleotide sequence ID" value="NM_020895.5"/>
    <property type="RefSeq protein sequence ID" value="NP_065946.2"/>
</dbReference>
<dbReference type="UCSC" id="uc002nxk.3">
    <molecule id="Q96CP6-1"/>
    <property type="organism name" value="human"/>
</dbReference>
<dbReference type="AGR" id="HGNC:29305"/>
<dbReference type="CTD" id="57655"/>
<dbReference type="DisGeNET" id="57655"/>
<dbReference type="GeneCards" id="GRAMD1A"/>
<dbReference type="HGNC" id="HGNC:29305">
    <property type="gene designation" value="GRAMD1A"/>
</dbReference>
<dbReference type="HPA" id="ENSG00000089351">
    <property type="expression patterns" value="Low tissue specificity"/>
</dbReference>
<dbReference type="MIM" id="620178">
    <property type="type" value="gene"/>
</dbReference>
<dbReference type="neXtProt" id="NX_Q96CP6"/>
<dbReference type="OpenTargets" id="ENSG00000089351"/>
<dbReference type="PharmGKB" id="PA134869487"/>
<dbReference type="VEuPathDB" id="HostDB:ENSG00000089351"/>
<dbReference type="eggNOG" id="KOG1032">
    <property type="taxonomic scope" value="Eukaryota"/>
</dbReference>
<dbReference type="GeneTree" id="ENSGT00940000161007"/>
<dbReference type="HOGENOM" id="CLU_015189_1_0_1"/>
<dbReference type="InParanoid" id="Q96CP6"/>
<dbReference type="OMA" id="LIVYSCA"/>
<dbReference type="OrthoDB" id="2162691at2759"/>
<dbReference type="PAN-GO" id="Q96CP6">
    <property type="GO annotations" value="6 GO annotations based on evolutionary models"/>
</dbReference>
<dbReference type="PhylomeDB" id="Q96CP6"/>
<dbReference type="TreeFam" id="TF327695"/>
<dbReference type="PathwayCommons" id="Q96CP6"/>
<dbReference type="SignaLink" id="Q96CP6"/>
<dbReference type="BioGRID-ORCS" id="57655">
    <property type="hits" value="91 hits in 1156 CRISPR screens"/>
</dbReference>
<dbReference type="ChiTaRS" id="GRAMD1A">
    <property type="organism name" value="human"/>
</dbReference>
<dbReference type="GenomeRNAi" id="57655"/>
<dbReference type="Pharos" id="Q96CP6">
    <property type="development level" value="Tbio"/>
</dbReference>
<dbReference type="PRO" id="PR:Q96CP6"/>
<dbReference type="Proteomes" id="UP000005640">
    <property type="component" value="Chromosome 19"/>
</dbReference>
<dbReference type="RNAct" id="Q96CP6">
    <property type="molecule type" value="protein"/>
</dbReference>
<dbReference type="Bgee" id="ENSG00000089351">
    <property type="expression patterns" value="Expressed in body of pancreas and 164 other cell types or tissues"/>
</dbReference>
<dbReference type="ExpressionAtlas" id="Q96CP6">
    <property type="expression patterns" value="baseline and differential"/>
</dbReference>
<dbReference type="GO" id="GO:0005776">
    <property type="term" value="C:autophagosome"/>
    <property type="evidence" value="ECO:0007669"/>
    <property type="project" value="UniProtKB-SubCell"/>
</dbReference>
<dbReference type="GO" id="GO:0031410">
    <property type="term" value="C:cytoplasmic vesicle"/>
    <property type="evidence" value="ECO:0007669"/>
    <property type="project" value="UniProtKB-KW"/>
</dbReference>
<dbReference type="GO" id="GO:0005829">
    <property type="term" value="C:cytosol"/>
    <property type="evidence" value="ECO:0000314"/>
    <property type="project" value="HPA"/>
</dbReference>
<dbReference type="GO" id="GO:0005789">
    <property type="term" value="C:endoplasmic reticulum membrane"/>
    <property type="evidence" value="ECO:0000314"/>
    <property type="project" value="UniProtKB"/>
</dbReference>
<dbReference type="GO" id="GO:0140268">
    <property type="term" value="C:endoplasmic reticulum-plasma membrane contact site"/>
    <property type="evidence" value="ECO:0000250"/>
    <property type="project" value="UniProtKB"/>
</dbReference>
<dbReference type="GO" id="GO:0044232">
    <property type="term" value="C:organelle membrane contact site"/>
    <property type="evidence" value="ECO:0000314"/>
    <property type="project" value="UniProtKB"/>
</dbReference>
<dbReference type="GO" id="GO:0005886">
    <property type="term" value="C:plasma membrane"/>
    <property type="evidence" value="ECO:0000314"/>
    <property type="project" value="HPA"/>
</dbReference>
<dbReference type="GO" id="GO:0015485">
    <property type="term" value="F:cholesterol binding"/>
    <property type="evidence" value="ECO:0000250"/>
    <property type="project" value="UniProtKB"/>
</dbReference>
<dbReference type="GO" id="GO:0120020">
    <property type="term" value="F:cholesterol transfer activity"/>
    <property type="evidence" value="ECO:0000250"/>
    <property type="project" value="UniProtKB"/>
</dbReference>
<dbReference type="GO" id="GO:0006914">
    <property type="term" value="P:autophagy"/>
    <property type="evidence" value="ECO:0007669"/>
    <property type="project" value="UniProtKB-KW"/>
</dbReference>
<dbReference type="GO" id="GO:0071397">
    <property type="term" value="P:cellular response to cholesterol"/>
    <property type="evidence" value="ECO:0000250"/>
    <property type="project" value="UniProtKB"/>
</dbReference>
<dbReference type="GO" id="GO:0032366">
    <property type="term" value="P:intracellular sterol transport"/>
    <property type="evidence" value="ECO:0000318"/>
    <property type="project" value="GO_Central"/>
</dbReference>
<dbReference type="CDD" id="cd13220">
    <property type="entry name" value="PH-GRAM_GRAMDC"/>
    <property type="match status" value="1"/>
</dbReference>
<dbReference type="FunFam" id="2.30.29.30:FF:000008">
    <property type="entry name" value="GRAM domain containing 1B"/>
    <property type="match status" value="1"/>
</dbReference>
<dbReference type="Gene3D" id="2.30.29.30">
    <property type="entry name" value="Pleckstrin-homology domain (PH domain)/Phosphotyrosine-binding domain (PTB)"/>
    <property type="match status" value="1"/>
</dbReference>
<dbReference type="InterPro" id="IPR051482">
    <property type="entry name" value="Cholesterol_transport"/>
</dbReference>
<dbReference type="InterPro" id="IPR004182">
    <property type="entry name" value="GRAM"/>
</dbReference>
<dbReference type="InterPro" id="IPR011993">
    <property type="entry name" value="PH-like_dom_sf"/>
</dbReference>
<dbReference type="InterPro" id="IPR031968">
    <property type="entry name" value="VASt"/>
</dbReference>
<dbReference type="PANTHER" id="PTHR23319">
    <property type="entry name" value="GRAM DOMAIN CONTAINING 1B, ISOFORM E"/>
    <property type="match status" value="1"/>
</dbReference>
<dbReference type="PANTHER" id="PTHR23319:SF8">
    <property type="entry name" value="PROTEIN ASTER-A"/>
    <property type="match status" value="1"/>
</dbReference>
<dbReference type="Pfam" id="PF02893">
    <property type="entry name" value="GRAM"/>
    <property type="match status" value="1"/>
</dbReference>
<dbReference type="Pfam" id="PF16016">
    <property type="entry name" value="VASt"/>
    <property type="match status" value="1"/>
</dbReference>
<dbReference type="SMART" id="SM00568">
    <property type="entry name" value="GRAM"/>
    <property type="match status" value="1"/>
</dbReference>
<dbReference type="PROSITE" id="PS51778">
    <property type="entry name" value="VAST"/>
    <property type="match status" value="1"/>
</dbReference>
<sequence length="724" mass="80680">MFDTTPHSGRSTPSSSPSLRKRLQLLPPSRPPPEPEPGTMVEKGSDSSSEKGGVPGTPSTQSLGSRNFIRNSKKMQSWYSMLSPTYKQRNEDFRKLFSKLPEAERLIVDYSCALQREILLQGRLYLSENWICFYSNIFRWETTISIQLKEVTCLKKEKTAKLIPNAIQICTESEKHFFTSFGARDRCFLLIFRLWQNALLEKTLSPRELWHLVHQCYGSELGLTSEDEDYVSPLQLNGLGTPKEVGDVIALSDITSSGAADRSQEPSPVGSRRGHVTPNLSRASSDADHGAEEDKEEQVDSQPDASSSQTVTPVAEPPSTEPTQPDGPTTLGPLDLLPSEELLTDTSNSSSSTGEEADLAALLPDLSGRLLINSVFHVGAERLQQMLFSDSPFLQGFLQQCKFTDVTLSPWSGDSKCHQRRVLTYTIPISNPLGPKSASVVETQTLFRRGPQAGGCVVDSEVLTQGIPYQDYFYTAHRYCILGLARNKARLRVSSEIRYRKQPWSLVKSLIEKNSWSGIEDYFHHLERELAKAEKLSLEEGGKDARGLLSGLRRRKRPLSWRAHGDGPQHPDPDPCARAGIHTSGSLSSRFSEPSVDQGPGAGIPSALVLISIVICVSLIILIALNVLLFYRLWSLERTAHTFESWHSLALAKGKFPQTATEWAEILALQKQFHSVEVHKWRQILRASVELLDEMKFSLEKLHQGITVSDPPFDTQPRPDDSFS</sequence>
<feature type="chain" id="PRO_0000287446" description="Protein Aster-A">
    <location>
        <begin position="1"/>
        <end position="724"/>
    </location>
</feature>
<feature type="transmembrane region" description="Helical" evidence="2">
    <location>
        <begin position="610"/>
        <end position="630"/>
    </location>
</feature>
<feature type="domain" description="GRAM" evidence="2">
    <location>
        <begin position="91"/>
        <end position="158"/>
    </location>
</feature>
<feature type="domain" description="VASt" evidence="3">
    <location>
        <begin position="367"/>
        <end position="538"/>
    </location>
</feature>
<feature type="region of interest" description="Disordered" evidence="4">
    <location>
        <begin position="1"/>
        <end position="66"/>
    </location>
</feature>
<feature type="region of interest" description="Disordered" evidence="4">
    <location>
        <begin position="256"/>
        <end position="336"/>
    </location>
</feature>
<feature type="region of interest" description="Disordered" evidence="4">
    <location>
        <begin position="560"/>
        <end position="579"/>
    </location>
</feature>
<feature type="compositionally biased region" description="Low complexity" evidence="4">
    <location>
        <begin position="1"/>
        <end position="18"/>
    </location>
</feature>
<feature type="compositionally biased region" description="Polar residues" evidence="4">
    <location>
        <begin position="57"/>
        <end position="66"/>
    </location>
</feature>
<feature type="compositionally biased region" description="Polar residues" evidence="4">
    <location>
        <begin position="300"/>
        <end position="312"/>
    </location>
</feature>
<feature type="compositionally biased region" description="Low complexity" evidence="4">
    <location>
        <begin position="326"/>
        <end position="336"/>
    </location>
</feature>
<feature type="compositionally biased region" description="Basic and acidic residues" evidence="4">
    <location>
        <begin position="563"/>
        <end position="575"/>
    </location>
</feature>
<feature type="modified residue" description="Phosphoserine" evidence="12 13 14">
    <location>
        <position position="263"/>
    </location>
</feature>
<feature type="modified residue" description="Phosphoserine" evidence="12">
    <location>
        <position position="267"/>
    </location>
</feature>
<feature type="modified residue" description="Phosphoserine" evidence="1">
    <location>
        <position position="271"/>
    </location>
</feature>
<feature type="modified residue" description="Phosphoserine" evidence="15">
    <location>
        <position position="415"/>
    </location>
</feature>
<feature type="splice variant" id="VSP_025465" description="In isoform 2." evidence="9">
    <location>
        <begin position="74"/>
        <end position="80"/>
    </location>
</feature>
<feature type="splice variant" id="VSP_025466" description="In isoform 2 and isoform 3." evidence="8 9">
    <location>
        <begin position="615"/>
        <end position="618"/>
    </location>
</feature>
<feature type="sequence conflict" description="In Ref. 1; BAC11289." evidence="10" ref="1">
    <original>S</original>
    <variation>P</variation>
    <location>
        <position position="439"/>
    </location>
</feature>
<feature type="sequence conflict" description="In Ref. 1; BAC11289." evidence="10" ref="1">
    <original>H</original>
    <variation>R</variation>
    <location>
        <position position="477"/>
    </location>
</feature>
<proteinExistence type="evidence at protein level"/>
<protein>
    <recommendedName>
        <fullName evidence="1">Protein Aster-A</fullName>
    </recommendedName>
    <alternativeName>
        <fullName evidence="10">GRAM domain-containing protein 1A</fullName>
    </alternativeName>
</protein>
<organism>
    <name type="scientific">Homo sapiens</name>
    <name type="common">Human</name>
    <dbReference type="NCBI Taxonomy" id="9606"/>
    <lineage>
        <taxon>Eukaryota</taxon>
        <taxon>Metazoa</taxon>
        <taxon>Chordata</taxon>
        <taxon>Craniata</taxon>
        <taxon>Vertebrata</taxon>
        <taxon>Euteleostomi</taxon>
        <taxon>Mammalia</taxon>
        <taxon>Eutheria</taxon>
        <taxon>Euarchontoglires</taxon>
        <taxon>Primates</taxon>
        <taxon>Haplorrhini</taxon>
        <taxon>Catarrhini</taxon>
        <taxon>Hominidae</taxon>
        <taxon>Homo</taxon>
    </lineage>
</organism>
<gene>
    <name evidence="11" type="primary">GRAMD1A</name>
    <name type="synonym">KIAA1533</name>
</gene>
<accession>Q96CP6</accession>
<accession>A6NKY7</accession>
<accession>Q8NC77</accession>
<accession>Q9P1Z5</accession>
<comment type="function">
    <text evidence="1 7">Cholesterol transporter that mediates non-vesicular transport of cholesterol from the plasma membrane (PM) to the endoplasmic reticulum (ER) (By similarity). Contains unique domains for binding cholesterol and the PM, thereby serving as a molecular bridge for the transfer of cholesterol from the PM to the ER (By similarity). Plays a crucial role in cholesterol homeostasis and has the unique ability to localize to the PM based on the level of membrane cholesterol (By similarity). In lipid-poor conditions localizes to the ER membrane and in response to excess cholesterol in the PM is recruited to the endoplasmic reticulum-plasma membrane contact sites (EPCS) which is mediated by the GRAM domain (By similarity). At the EPCS, the sterol-binding VASt/ASTER domain binds to the cholesterol in the PM and facilitates its transfer from the PM to ER (By similarity). May play a role in tumor progression (By similarity). Plays a role in autophagy regulation and is required for biogenesis of the autophagosome (PubMed:31222192). This function in autophagy requires its cholesterol-transfer activity (PubMed:31222192).</text>
</comment>
<comment type="interaction">
    <interactant intactId="EBI-1384139">
        <id>Q96CP6</id>
    </interactant>
    <interactant intactId="EBI-10172181">
        <id>Q53SE7</id>
        <label>FLJ13057</label>
    </interactant>
    <organismsDiffer>false</organismsDiffer>
    <experiments>3</experiments>
</comment>
<comment type="interaction">
    <interactant intactId="EBI-1384139">
        <id>Q96CP6</id>
    </interactant>
    <interactant intactId="EBI-3932027">
        <id>P21145</id>
        <label>MAL</label>
    </interactant>
    <organismsDiffer>false</organismsDiffer>
    <experiments>3</experiments>
</comment>
<comment type="subcellular location">
    <subcellularLocation>
        <location evidence="6">Endoplasmic reticulum membrane</location>
        <topology evidence="2">Single-pass membrane protein</topology>
    </subcellularLocation>
    <subcellularLocation>
        <location evidence="6">Cell membrane</location>
        <topology evidence="2">Single-pass membrane protein</topology>
    </subcellularLocation>
    <subcellularLocation>
        <location evidence="7">Cytoplasmic vesicle</location>
        <location evidence="7">Autophagosome</location>
    </subcellularLocation>
    <text evidence="1 6">In lipid-poor conditions localizes to the ER membrane and is recruited to endoplasmic reticulum-plasma membrane contact sites (EPCS) in response to excess cholesterol in the PM (By similarity). Localizes to distinct EPCS than GRAMD2A and ESYT2/3 (PubMed:29469807).</text>
</comment>
<comment type="alternative products">
    <event type="alternative splicing"/>
    <isoform>
        <id>Q96CP6-1</id>
        <name>1</name>
        <sequence type="displayed"/>
    </isoform>
    <isoform>
        <id>Q96CP6-2</id>
        <name>2</name>
        <sequence type="described" ref="VSP_025465 VSP_025466"/>
    </isoform>
    <isoform>
        <id>Q96CP6-3</id>
        <name>3</name>
        <sequence type="described" ref="VSP_025466"/>
    </isoform>
</comment>
<comment type="tissue specificity">
    <text evidence="5">Expressed in liver.</text>
</comment>
<comment type="induction">
    <text evidence="5">Up-regulated in hepatocellular carcinoma tissues.</text>
</comment>
<comment type="domain">
    <text evidence="6">GRAM domain binds phosphatidylserine in the PM and mediates protein recruitment to endoplasmic reticulum-plasma membrane contact sites (EPCS) in response to excess cholesterol in the PM.</text>
</comment>
<comment type="domain">
    <text evidence="1">VASt (VAD1 Analog of StAR-related lipid transfer) domain, also known as ASTER (Greek for star) domain is a sterol-binding domain.</text>
</comment>
<keyword id="KW-0025">Alternative splicing</keyword>
<keyword id="KW-0072">Autophagy</keyword>
<keyword id="KW-1003">Cell membrane</keyword>
<keyword id="KW-0968">Cytoplasmic vesicle</keyword>
<keyword id="KW-0256">Endoplasmic reticulum</keyword>
<keyword id="KW-0445">Lipid transport</keyword>
<keyword id="KW-0446">Lipid-binding</keyword>
<keyword id="KW-0472">Membrane</keyword>
<keyword id="KW-0597">Phosphoprotein</keyword>
<keyword id="KW-1267">Proteomics identification</keyword>
<keyword id="KW-1185">Reference proteome</keyword>
<keyword id="KW-0812">Transmembrane</keyword>
<keyword id="KW-1133">Transmembrane helix</keyword>
<keyword id="KW-0813">Transport</keyword>